<evidence type="ECO:0000250" key="1">
    <source>
        <dbReference type="UniProtKB" id="Q2FK70"/>
    </source>
</evidence>
<evidence type="ECO:0000255" key="2">
    <source>
        <dbReference type="PROSITE-ProRule" id="PRU00421"/>
    </source>
</evidence>
<evidence type="ECO:0000255" key="3">
    <source>
        <dbReference type="PROSITE-ProRule" id="PRU00426"/>
    </source>
</evidence>
<keyword id="KW-1003">Cell membrane</keyword>
<keyword id="KW-0418">Kinase</keyword>
<keyword id="KW-0472">Membrane</keyword>
<keyword id="KW-0598">Phosphotransferase system</keyword>
<keyword id="KW-1185">Reference proteome</keyword>
<keyword id="KW-0762">Sugar transport</keyword>
<keyword id="KW-0808">Transferase</keyword>
<keyword id="KW-0812">Transmembrane</keyword>
<keyword id="KW-1133">Transmembrane helix</keyword>
<keyword id="KW-0813">Transport</keyword>
<proteinExistence type="inferred from homology"/>
<name>PTXBC_STAA8</name>
<gene>
    <name type="ordered locus">SAOUHSC_00158</name>
</gene>
<dbReference type="EC" id="2.7.1.-" evidence="1"/>
<dbReference type="EMBL" id="CP000253">
    <property type="protein sequence ID" value="ABD29338.1"/>
    <property type="molecule type" value="Genomic_DNA"/>
</dbReference>
<dbReference type="RefSeq" id="WP_000159750.1">
    <property type="nucleotide sequence ID" value="NZ_LS483365.1"/>
</dbReference>
<dbReference type="RefSeq" id="YP_498757.1">
    <property type="nucleotide sequence ID" value="NC_007795.1"/>
</dbReference>
<dbReference type="SMR" id="Q2G1G5"/>
<dbReference type="STRING" id="93061.SAOUHSC_00158"/>
<dbReference type="PaxDb" id="1280-SAXN108_0178"/>
<dbReference type="GeneID" id="3919866"/>
<dbReference type="KEGG" id="sao:SAOUHSC_00158"/>
<dbReference type="PATRIC" id="fig|93061.5.peg.148"/>
<dbReference type="eggNOG" id="COG1263">
    <property type="taxonomic scope" value="Bacteria"/>
</dbReference>
<dbReference type="eggNOG" id="COG1264">
    <property type="taxonomic scope" value="Bacteria"/>
</dbReference>
<dbReference type="HOGENOM" id="CLU_012312_2_0_9"/>
<dbReference type="OrthoDB" id="9769191at2"/>
<dbReference type="UniPathway" id="UPA00544"/>
<dbReference type="PRO" id="PR:Q2G1G5"/>
<dbReference type="Proteomes" id="UP000008816">
    <property type="component" value="Chromosome"/>
</dbReference>
<dbReference type="GO" id="GO:0005886">
    <property type="term" value="C:plasma membrane"/>
    <property type="evidence" value="ECO:0000318"/>
    <property type="project" value="GO_Central"/>
</dbReference>
<dbReference type="GO" id="GO:0016301">
    <property type="term" value="F:kinase activity"/>
    <property type="evidence" value="ECO:0007669"/>
    <property type="project" value="UniProtKB-KW"/>
</dbReference>
<dbReference type="GO" id="GO:0008982">
    <property type="term" value="F:protein-N(PI)-phosphohistidine-sugar phosphotransferase activity"/>
    <property type="evidence" value="ECO:0007669"/>
    <property type="project" value="InterPro"/>
</dbReference>
<dbReference type="GO" id="GO:0090588">
    <property type="term" value="F:protein-phosphocysteine-N-acetylmuramate phosphotransferase system transporter activity"/>
    <property type="evidence" value="ECO:0000318"/>
    <property type="project" value="GO_Central"/>
</dbReference>
<dbReference type="GO" id="GO:0009254">
    <property type="term" value="P:peptidoglycan turnover"/>
    <property type="evidence" value="ECO:0007669"/>
    <property type="project" value="UniProtKB-UniPathway"/>
</dbReference>
<dbReference type="GO" id="GO:0009401">
    <property type="term" value="P:phosphoenolpyruvate-dependent sugar phosphotransferase system"/>
    <property type="evidence" value="ECO:0000318"/>
    <property type="project" value="GO_Central"/>
</dbReference>
<dbReference type="CDD" id="cd00212">
    <property type="entry name" value="PTS_IIB_glc"/>
    <property type="match status" value="1"/>
</dbReference>
<dbReference type="FunFam" id="3.30.1360.60:FF:000001">
    <property type="entry name" value="PTS system glucose-specific IIBC component PtsG"/>
    <property type="match status" value="1"/>
</dbReference>
<dbReference type="Gene3D" id="3.30.1360.60">
    <property type="entry name" value="Glucose permease domain IIB"/>
    <property type="match status" value="1"/>
</dbReference>
<dbReference type="InterPro" id="IPR036878">
    <property type="entry name" value="Glu_permease_IIB"/>
</dbReference>
<dbReference type="InterPro" id="IPR018113">
    <property type="entry name" value="PTrfase_EIIB_Cys"/>
</dbReference>
<dbReference type="InterPro" id="IPR003352">
    <property type="entry name" value="PTS_EIIC"/>
</dbReference>
<dbReference type="InterPro" id="IPR013013">
    <property type="entry name" value="PTS_EIIC_1"/>
</dbReference>
<dbReference type="InterPro" id="IPR001996">
    <property type="entry name" value="PTS_IIB_1"/>
</dbReference>
<dbReference type="InterPro" id="IPR050558">
    <property type="entry name" value="PTS_Sugar-Specific_Components"/>
</dbReference>
<dbReference type="PANTHER" id="PTHR30175">
    <property type="entry name" value="PHOSPHOTRANSFERASE SYSTEM TRANSPORT PROTEIN"/>
    <property type="match status" value="1"/>
</dbReference>
<dbReference type="PANTHER" id="PTHR30175:SF3">
    <property type="entry name" value="PTS SYSTEM N-ACETYLMURAMIC ACID-SPECIFIC EIIBC COMPONENT"/>
    <property type="match status" value="1"/>
</dbReference>
<dbReference type="Pfam" id="PF00367">
    <property type="entry name" value="PTS_EIIB"/>
    <property type="match status" value="1"/>
</dbReference>
<dbReference type="Pfam" id="PF02378">
    <property type="entry name" value="PTS_EIIC"/>
    <property type="match status" value="1"/>
</dbReference>
<dbReference type="SUPFAM" id="SSF55604">
    <property type="entry name" value="Glucose permease domain IIB"/>
    <property type="match status" value="1"/>
</dbReference>
<dbReference type="PROSITE" id="PS51098">
    <property type="entry name" value="PTS_EIIB_TYPE_1"/>
    <property type="match status" value="1"/>
</dbReference>
<dbReference type="PROSITE" id="PS01035">
    <property type="entry name" value="PTS_EIIB_TYPE_1_CYS"/>
    <property type="match status" value="1"/>
</dbReference>
<dbReference type="PROSITE" id="PS51103">
    <property type="entry name" value="PTS_EIIC_TYPE_1"/>
    <property type="match status" value="1"/>
</dbReference>
<feature type="chain" id="PRO_0000272173" description="PTS system MurNAc-GlcNAc-specific EIIBC component">
    <location>
        <begin position="1"/>
        <end position="484"/>
    </location>
</feature>
<feature type="transmembrane region" description="Helical" evidence="3">
    <location>
        <begin position="135"/>
        <end position="155"/>
    </location>
</feature>
<feature type="transmembrane region" description="Helical" evidence="3">
    <location>
        <begin position="160"/>
        <end position="180"/>
    </location>
</feature>
<feature type="transmembrane region" description="Helical" evidence="3">
    <location>
        <begin position="200"/>
        <end position="220"/>
    </location>
</feature>
<feature type="transmembrane region" description="Helical" evidence="3">
    <location>
        <begin position="234"/>
        <end position="254"/>
    </location>
</feature>
<feature type="transmembrane region" description="Helical" evidence="3">
    <location>
        <begin position="274"/>
        <end position="294"/>
    </location>
</feature>
<feature type="transmembrane region" description="Helical" evidence="3">
    <location>
        <begin position="305"/>
        <end position="325"/>
    </location>
</feature>
<feature type="transmembrane region" description="Helical" evidence="3">
    <location>
        <begin position="349"/>
        <end position="369"/>
    </location>
</feature>
<feature type="transmembrane region" description="Helical" evidence="3">
    <location>
        <begin position="384"/>
        <end position="404"/>
    </location>
</feature>
<feature type="transmembrane region" description="Helical" evidence="3">
    <location>
        <begin position="408"/>
        <end position="428"/>
    </location>
</feature>
<feature type="transmembrane region" description="Helical" evidence="3">
    <location>
        <begin position="450"/>
        <end position="470"/>
    </location>
</feature>
<feature type="domain" description="PTS EIIB type-1" evidence="2">
    <location>
        <begin position="5"/>
        <end position="87"/>
    </location>
</feature>
<feature type="domain" description="PTS EIIC type-1" evidence="3">
    <location>
        <begin position="130"/>
        <end position="484"/>
    </location>
</feature>
<feature type="active site" description="Phosphocysteine intermediate; for EIIB activity" evidence="2">
    <location>
        <position position="27"/>
    </location>
</feature>
<accession>Q2G1G5</accession>
<reference key="1">
    <citation type="book" date="2006" name="Gram positive pathogens, 2nd edition">
        <title>The Staphylococcus aureus NCTC 8325 genome.</title>
        <editorList>
            <person name="Fischetti V."/>
            <person name="Novick R."/>
            <person name="Ferretti J."/>
            <person name="Portnoy D."/>
            <person name="Rood J."/>
        </editorList>
        <authorList>
            <person name="Gillaspy A.F."/>
            <person name="Worrell V."/>
            <person name="Orvis J."/>
            <person name="Roe B.A."/>
            <person name="Dyer D.W."/>
            <person name="Iandolo J.J."/>
        </authorList>
    </citation>
    <scope>NUCLEOTIDE SEQUENCE [LARGE SCALE GENOMIC DNA]</scope>
    <source>
        <strain>NCTC 8325 / PS 47</strain>
    </source>
</reference>
<sequence>MTKEQQLAERIIAAVGGMDNIDSVMNCMTRVRIKVLDENKVDDQELRHIDGVMGVIHDERIQVVVGPGTVNKVANHMAELSGVKLGDPIPHHHNDSEKMDYKSYAADKAKANKEAHKAKQKNGKLNKVLKSIANIFIPLIPAFIGAGLIGGIAAVLSNLMVAGYISGAWITQLITVFNVIKDGMLAYLAIFTGINAAKEFGATPGLGGVIGGTTLLTGIAGKNILMNVFTGEPLQPGQGGIIGVIFAVWILSIVEKRLHKIVPNAIDIIVTPTIALLIVGLLTIFIFMPLAGFVSDSLVSVVNGIISIGGVFSGFIIGASFLPLVMLGLHHIFTPIHIEMINQSGATYLLPIAAMAGAGQVGAALALWVRCKRNTTLRNTLKGALPVGFLGIGEPLIYGVTLPLGRPFLTACIGGGIGGAVIGGIGHIGAKAIGPSGVSLLPLISDNMYLGYIAGLLAAYAGGFVCTYLFGTTKAMRQTDLLGD</sequence>
<organism>
    <name type="scientific">Staphylococcus aureus (strain NCTC 8325 / PS 47)</name>
    <dbReference type="NCBI Taxonomy" id="93061"/>
    <lineage>
        <taxon>Bacteria</taxon>
        <taxon>Bacillati</taxon>
        <taxon>Bacillota</taxon>
        <taxon>Bacilli</taxon>
        <taxon>Bacillales</taxon>
        <taxon>Staphylococcaceae</taxon>
        <taxon>Staphylococcus</taxon>
    </lineage>
</organism>
<protein>
    <recommendedName>
        <fullName evidence="1">PTS system MurNAc-GlcNAc-specific EIIBC component</fullName>
    </recommendedName>
    <domain>
        <recommendedName>
            <fullName>MurNAc-GlcNAc-specific phosphotransferase enzyme IIB component</fullName>
            <ecNumber evidence="1">2.7.1.-</ecNumber>
        </recommendedName>
        <alternativeName>
            <fullName>PTS system MurNAc-GlcNAc-specific EIIB component</fullName>
        </alternativeName>
    </domain>
    <domain>
        <recommendedName>
            <fullName>MurNAc-GlcNAc permease IIC component</fullName>
        </recommendedName>
        <alternativeName>
            <fullName>PTS system MurNAc-GlcNAc-specific EIIC component</fullName>
        </alternativeName>
    </domain>
</protein>
<comment type="function">
    <text evidence="1">The phosphoenolpyruvate-dependent sugar phosphotransferase system (sugar PTS), a major carbohydrate active transport system, catalyzes the phosphorylation of incoming sugar substrates concomitantly with their translocation across the cell membrane. This system is involved in the uptake and phosphorylation of MurNAc-GlcNAc, the principle peptidoglycan turnover product of S.aureus, yielding cytoplasmic MurNAc 6P-GlcNAc.</text>
</comment>
<comment type="catalytic activity">
    <reaction evidence="1">
        <text>N-acetyl-beta-D-muramate-(1-&gt;4)-N-acetyl-D-glucosamine(out) + N(pros)-phospho-L-histidyl-[protein] = 6-phospho-N-acetyl-beta-D-muramate-(1-&gt;4)-N-acetyl-D-glucosamine(in) + L-histidyl-[protein]</text>
        <dbReference type="Rhea" id="RHEA:66784"/>
        <dbReference type="Rhea" id="RHEA-COMP:9745"/>
        <dbReference type="Rhea" id="RHEA-COMP:9746"/>
        <dbReference type="ChEBI" id="CHEBI:29979"/>
        <dbReference type="ChEBI" id="CHEBI:64837"/>
        <dbReference type="ChEBI" id="CHEBI:167476"/>
        <dbReference type="ChEBI" id="CHEBI:167477"/>
    </reaction>
    <physiologicalReaction direction="left-to-right" evidence="1">
        <dbReference type="Rhea" id="RHEA:66785"/>
    </physiologicalReaction>
</comment>
<comment type="pathway">
    <text evidence="1">Cell wall biogenesis; peptidoglycan recycling.</text>
</comment>
<comment type="subcellular location">
    <subcellularLocation>
        <location evidence="3">Cell membrane</location>
        <topology evidence="3">Multi-pass membrane protein</topology>
    </subcellularLocation>
</comment>
<comment type="domain">
    <text>The EIIB domain is phosphorylated by phospho-EIIA on a cysteinyl or histidyl residue, depending on the transported sugar. Then, it transfers the phosphoryl group to the sugar substrate concomitantly with the sugar uptake processed by the EIIC domain.</text>
</comment>
<comment type="domain">
    <text>The EIIC domain forms the PTS system translocation channel and contains the specific substrate-binding site.</text>
</comment>